<dbReference type="EMBL" id="BC091322">
    <property type="protein sequence ID" value="AAH91322.1"/>
    <property type="molecule type" value="mRNA"/>
</dbReference>
<dbReference type="RefSeq" id="NP_001020285.1">
    <property type="nucleotide sequence ID" value="NM_001025114.2"/>
</dbReference>
<dbReference type="RefSeq" id="NP_001421553.1">
    <property type="nucleotide sequence ID" value="NM_001434624.1"/>
</dbReference>
<dbReference type="RefSeq" id="XP_006256648.1">
    <property type="nucleotide sequence ID" value="XM_006256586.3"/>
</dbReference>
<dbReference type="SMR" id="Q5BJU7"/>
<dbReference type="BioGRID" id="254741">
    <property type="interactions" value="4"/>
</dbReference>
<dbReference type="DIP" id="DIP-42570N"/>
<dbReference type="FunCoup" id="Q5BJU7">
    <property type="interactions" value="3580"/>
</dbReference>
<dbReference type="IntAct" id="Q5BJU7">
    <property type="interactions" value="8"/>
</dbReference>
<dbReference type="MINT" id="Q5BJU7"/>
<dbReference type="STRING" id="10116.ENSRNOP00000064342"/>
<dbReference type="GlyGen" id="Q5BJU7">
    <property type="glycosylation" value="3 sites, 1 O-linked glycan (1 site)"/>
</dbReference>
<dbReference type="iPTMnet" id="Q5BJU7"/>
<dbReference type="PhosphoSitePlus" id="Q5BJU7"/>
<dbReference type="PaxDb" id="10116-ENSRNOP00000064342"/>
<dbReference type="ABCD" id="Q5BJU7">
    <property type="antibodies" value="1 sequenced antibody"/>
</dbReference>
<dbReference type="GeneID" id="294568"/>
<dbReference type="KEGG" id="rno:294568"/>
<dbReference type="AGR" id="RGD:1561954"/>
<dbReference type="CTD" id="8936"/>
<dbReference type="RGD" id="1561954">
    <property type="gene designation" value="Wasf1"/>
</dbReference>
<dbReference type="VEuPathDB" id="HostDB:ENSRNOG00000047476"/>
<dbReference type="eggNOG" id="KOG1830">
    <property type="taxonomic scope" value="Eukaryota"/>
</dbReference>
<dbReference type="HOGENOM" id="CLU_036022_2_0_1"/>
<dbReference type="InParanoid" id="Q5BJU7"/>
<dbReference type="OrthoDB" id="1060785at2759"/>
<dbReference type="PhylomeDB" id="Q5BJU7"/>
<dbReference type="Reactome" id="R-RNO-2029482">
    <property type="pathway name" value="Regulation of actin dynamics for phagocytic cup formation"/>
</dbReference>
<dbReference type="Reactome" id="R-RNO-4420097">
    <property type="pathway name" value="VEGFA-VEGFR2 Pathway"/>
</dbReference>
<dbReference type="Reactome" id="R-RNO-5663213">
    <property type="pathway name" value="RHO GTPases Activate WASPs and WAVEs"/>
</dbReference>
<dbReference type="Reactome" id="R-RNO-9013149">
    <property type="pathway name" value="RAC1 GTPase cycle"/>
</dbReference>
<dbReference type="PRO" id="PR:Q5BJU7"/>
<dbReference type="Proteomes" id="UP000002494">
    <property type="component" value="Chromosome 20"/>
</dbReference>
<dbReference type="Bgee" id="ENSRNOG00000047476">
    <property type="expression patterns" value="Expressed in frontal cortex and 15 other cell types or tissues"/>
</dbReference>
<dbReference type="GO" id="GO:0005737">
    <property type="term" value="C:cytoplasm"/>
    <property type="evidence" value="ECO:0000266"/>
    <property type="project" value="RGD"/>
</dbReference>
<dbReference type="GO" id="GO:0005856">
    <property type="term" value="C:cytoskeleton"/>
    <property type="evidence" value="ECO:0007669"/>
    <property type="project" value="UniProtKB-SubCell"/>
</dbReference>
<dbReference type="GO" id="GO:0032839">
    <property type="term" value="C:dendrite cytoplasm"/>
    <property type="evidence" value="ECO:0007669"/>
    <property type="project" value="GOC"/>
</dbReference>
<dbReference type="GO" id="GO:0005925">
    <property type="term" value="C:focal adhesion"/>
    <property type="evidence" value="ECO:0007669"/>
    <property type="project" value="UniProtKB-SubCell"/>
</dbReference>
<dbReference type="GO" id="GO:0030027">
    <property type="term" value="C:lamellipodium"/>
    <property type="evidence" value="ECO:0000266"/>
    <property type="project" value="RGD"/>
</dbReference>
<dbReference type="GO" id="GO:0005741">
    <property type="term" value="C:mitochondrial outer membrane"/>
    <property type="evidence" value="ECO:0000266"/>
    <property type="project" value="RGD"/>
</dbReference>
<dbReference type="GO" id="GO:0005739">
    <property type="term" value="C:mitochondrion"/>
    <property type="evidence" value="ECO:0000266"/>
    <property type="project" value="RGD"/>
</dbReference>
<dbReference type="GO" id="GO:0098794">
    <property type="term" value="C:postsynapse"/>
    <property type="evidence" value="ECO:0000266"/>
    <property type="project" value="RGD"/>
</dbReference>
<dbReference type="GO" id="GO:0032991">
    <property type="term" value="C:protein-containing complex"/>
    <property type="evidence" value="ECO:0000266"/>
    <property type="project" value="RGD"/>
</dbReference>
<dbReference type="GO" id="GO:0031209">
    <property type="term" value="C:SCAR complex"/>
    <property type="evidence" value="ECO:0000266"/>
    <property type="project" value="RGD"/>
</dbReference>
<dbReference type="GO" id="GO:0003779">
    <property type="term" value="F:actin binding"/>
    <property type="evidence" value="ECO:0007669"/>
    <property type="project" value="UniProtKB-KW"/>
</dbReference>
<dbReference type="GO" id="GO:0071933">
    <property type="term" value="F:Arp2/3 complex binding"/>
    <property type="evidence" value="ECO:0000318"/>
    <property type="project" value="GO_Central"/>
</dbReference>
<dbReference type="GO" id="GO:0051018">
    <property type="term" value="F:protein kinase A binding"/>
    <property type="evidence" value="ECO:0000266"/>
    <property type="project" value="RGD"/>
</dbReference>
<dbReference type="GO" id="GO:0034237">
    <property type="term" value="F:protein kinase A regulatory subunit binding"/>
    <property type="evidence" value="ECO:0000318"/>
    <property type="project" value="GO_Central"/>
</dbReference>
<dbReference type="GO" id="GO:0031267">
    <property type="term" value="F:small GTPase binding"/>
    <property type="evidence" value="ECO:0007669"/>
    <property type="project" value="Ensembl"/>
</dbReference>
<dbReference type="GO" id="GO:0030036">
    <property type="term" value="P:actin cytoskeleton organization"/>
    <property type="evidence" value="ECO:0000250"/>
    <property type="project" value="UniProtKB"/>
</dbReference>
<dbReference type="GO" id="GO:1990416">
    <property type="term" value="P:cellular response to brain-derived neurotrophic factor stimulus"/>
    <property type="evidence" value="ECO:0000250"/>
    <property type="project" value="UniProtKB"/>
</dbReference>
<dbReference type="GO" id="GO:0097484">
    <property type="term" value="P:dendrite extension"/>
    <property type="evidence" value="ECO:0000266"/>
    <property type="project" value="RGD"/>
</dbReference>
<dbReference type="GO" id="GO:0098939">
    <property type="term" value="P:dendritic transport of mitochondrion"/>
    <property type="evidence" value="ECO:0000314"/>
    <property type="project" value="SynGO"/>
</dbReference>
<dbReference type="GO" id="GO:0072673">
    <property type="term" value="P:lamellipodium morphogenesis"/>
    <property type="evidence" value="ECO:0000250"/>
    <property type="project" value="UniProtKB"/>
</dbReference>
<dbReference type="GO" id="GO:0007005">
    <property type="term" value="P:mitochondrion organization"/>
    <property type="evidence" value="ECO:0000250"/>
    <property type="project" value="UniProtKB"/>
</dbReference>
<dbReference type="GO" id="GO:0098885">
    <property type="term" value="P:modification of postsynaptic actin cytoskeleton"/>
    <property type="evidence" value="ECO:0000266"/>
    <property type="project" value="RGD"/>
</dbReference>
<dbReference type="GO" id="GO:0031175">
    <property type="term" value="P:neuron projection development"/>
    <property type="evidence" value="ECO:0000266"/>
    <property type="project" value="RGD"/>
</dbReference>
<dbReference type="GO" id="GO:2000601">
    <property type="term" value="P:positive regulation of Arp2/3 complex-mediated actin nucleation"/>
    <property type="evidence" value="ECO:0000266"/>
    <property type="project" value="RGD"/>
</dbReference>
<dbReference type="GO" id="GO:0051388">
    <property type="term" value="P:positive regulation of neurotrophin TRK receptor signaling pathway"/>
    <property type="evidence" value="ECO:0000266"/>
    <property type="project" value="RGD"/>
</dbReference>
<dbReference type="GO" id="GO:0016601">
    <property type="term" value="P:Rac protein signal transduction"/>
    <property type="evidence" value="ECO:0000266"/>
    <property type="project" value="RGD"/>
</dbReference>
<dbReference type="GO" id="GO:0006898">
    <property type="term" value="P:receptor-mediated endocytosis"/>
    <property type="evidence" value="ECO:0000250"/>
    <property type="project" value="UniProtKB"/>
</dbReference>
<dbReference type="CDD" id="cd22071">
    <property type="entry name" value="WH2_WAVE-1"/>
    <property type="match status" value="1"/>
</dbReference>
<dbReference type="FunFam" id="1.20.5.340:FF:000012">
    <property type="entry name" value="Wiskott-Aldrich syndrome protein family member 1"/>
    <property type="match status" value="1"/>
</dbReference>
<dbReference type="Gene3D" id="1.20.5.340">
    <property type="match status" value="1"/>
</dbReference>
<dbReference type="Gene3D" id="6.10.280.150">
    <property type="match status" value="2"/>
</dbReference>
<dbReference type="InterPro" id="IPR028288">
    <property type="entry name" value="SCAR/WAVE_fam"/>
</dbReference>
<dbReference type="InterPro" id="IPR003124">
    <property type="entry name" value="WH2_dom"/>
</dbReference>
<dbReference type="PANTHER" id="PTHR12902:SF8">
    <property type="entry name" value="ACTIN-BINDING PROTEIN WASF1"/>
    <property type="match status" value="1"/>
</dbReference>
<dbReference type="PANTHER" id="PTHR12902">
    <property type="entry name" value="WASP-1"/>
    <property type="match status" value="1"/>
</dbReference>
<dbReference type="Pfam" id="PF02205">
    <property type="entry name" value="WH2"/>
    <property type="match status" value="1"/>
</dbReference>
<dbReference type="SMART" id="SM00246">
    <property type="entry name" value="WH2"/>
    <property type="match status" value="1"/>
</dbReference>
<dbReference type="PROSITE" id="PS51082">
    <property type="entry name" value="WH2"/>
    <property type="match status" value="1"/>
</dbReference>
<keyword id="KW-0009">Actin-binding</keyword>
<keyword id="KW-0965">Cell junction</keyword>
<keyword id="KW-0963">Cytoplasm</keyword>
<keyword id="KW-0206">Cytoskeleton</keyword>
<keyword id="KW-0488">Methylation</keyword>
<keyword id="KW-0597">Phosphoprotein</keyword>
<keyword id="KW-1185">Reference proteome</keyword>
<keyword id="KW-0770">Synapse</keyword>
<gene>
    <name type="primary">Wasf1</name>
    <name type="synonym">Wave1</name>
</gene>
<protein>
    <recommendedName>
        <fullName evidence="6">Actin-binding protein WASF1</fullName>
    </recommendedName>
    <alternativeName>
        <fullName>Protein WAVE-1</fullName>
    </alternativeName>
    <alternativeName>
        <fullName>Wiskott-Aldrich syndrome protein family member 1</fullName>
        <shortName>WASP family protein member 1</shortName>
    </alternativeName>
</protein>
<comment type="function">
    <text evidence="1 2">Downstream effector molecule involved in the transmission of signals from tyrosine kinase receptors and small GTPases to the actin cytoskeleton. Promotes formation of actin filaments. Part of the WAVE complex that regulates lamellipodia formation. The WAVE complex regulates actin filament reorganization via its interaction with the Arp2/3 complex (By similarity). As component of the WAVE1 complex, required for BDNF-NTRK2 endocytic trafficking and signaling from early endosomes (By similarity). Also involved in the regulation of mitochondrial dynamics (By similarity).</text>
</comment>
<comment type="subunit">
    <text evidence="2 5">Component of the WAVE1 complex composed of ABI2, CYFIP1 or CYFIP2, BRK1, NCKAP1 and WASF1/WAVE1. Within the complex, a heterodimer containing NCKAP1 and CYFIP1 interacts with a heterotrimer formed by WAVE1, ABI2 and BRK1. CYFIP2 binds to activated RAC1 which causes the complex to dissociate, releasing activated WASF1. The complex can also be activated by NCK1. Binds actin and the Arp2/3 complex. Interacts with BAIAP2. Interacts with SHANK3; the interaction mediates the association of SHANK3 with the WAVE1 complex. Interacts with ABI1 (via N-terminus). Interacts with SORBS2; this interaction greatly enhances phosphorylation by ABL1 and dephosphorylation by PTPN12 and might mediate partial to focal adhesion sites (By similarity).</text>
</comment>
<comment type="interaction">
    <interactant intactId="EBI-7269229">
        <id>Q5BJU7</id>
    </interactant>
    <interactant intactId="EBI-349272">
        <id>P60711</id>
        <label>Actb</label>
    </interactant>
    <organismsDiffer>false</organismsDiffer>
    <experiments>2</experiments>
</comment>
<comment type="interaction">
    <interactant intactId="EBI-7269229">
        <id>Q5BJU7</id>
    </interactant>
    <interactant intactId="EBI-874897">
        <id>P08753</id>
        <label>Gnai3</label>
    </interactant>
    <organismsDiffer>false</organismsDiffer>
    <experiments>2</experiments>
</comment>
<comment type="interaction">
    <interactant intactId="EBI-7269229">
        <id>Q5BJU7</id>
    </interactant>
    <interactant intactId="EBI-917779">
        <id>P54311</id>
        <label>Gnb1</label>
    </interactant>
    <organismsDiffer>false</organismsDiffer>
    <experiments>2</experiments>
</comment>
<comment type="subcellular location">
    <subcellularLocation>
        <location evidence="2">Cytoplasm</location>
        <location evidence="2">Cytoskeleton</location>
    </subcellularLocation>
    <subcellularLocation>
        <location evidence="5">Synapse</location>
    </subcellularLocation>
    <subcellularLocation>
        <location evidence="2">Cell junction</location>
        <location evidence="2">Focal adhesion</location>
    </subcellularLocation>
    <text evidence="1 2">Dot-like pattern in the cytoplasm. Concentrated in Rac-regulated membrane-ruffling areas. Partial translocation to focal adhesion sites might be mediated by interaction with SORBS2. In neurons, colocalizes with activated NTRK2 after BDNF addition in endocytic sites through the association with TMEM108 (By similarity).</text>
</comment>
<comment type="tissue specificity">
    <text evidence="5">Expressed in hippocampal neurons (at protein level).</text>
</comment>
<comment type="domain">
    <text evidence="2">Binds the Arp2/3 complex through the C-terminal region and actin through verprolin homology (VPH) domain.</text>
</comment>
<comment type="similarity">
    <text evidence="6">Belongs to the SCAR/WAVE family.</text>
</comment>
<sequence length="559" mass="61515">MPLVKRNIDPRHLCHTALPRGIKNELECVTNISLANIIRQLSSLSKYAEDIFGELFNEAHSFSFRVNSLQERVDRLSVSVTQLDPKEEELSLQDITMRKAFRSSTIQDQQLFDRKTLPIPLQETYDVCEQPPPLNVLTPYRDDGKEGLKFYTNPSYFFDLWKEKMLQDTEDKRKEKRKQKQKNLDRPHEPEKVPRAPHDRRREWQKLAQGPELAEDDADLLHKHIEVANGPASHFETRPQTYVDHMDGSYSLSALPFSQMSELLSRAEERVLVRPHEPPPPPPMHAAGDARPTPTCVSSAAGLIENRPQSPAAGRTPVFVSPTPPPPPPPLPSALSTSSLRASMTSTPPPPVPPPPPPPAPALQAPAVPPPPAPLQIAPGVLHPAPPPIAPPLVQPSPPVARAAPVCETVPVHPLPQGEVQGLPPPPPPPPLPPPGIRPSSPVTVAALAHPPSGLHPTPSPAPGPHAPLMPPSPPSQVLPASEPKRHPSTLPVISDARSVLLEAIRKGIQLRKVEEQREQEAKHERIENDVATILSRRIAVEYSDSEDDSEFDEVDWLE</sequence>
<feature type="chain" id="PRO_0000314291" description="Actin-binding protein WASF1">
    <location>
        <begin position="1"/>
        <end position="559"/>
    </location>
</feature>
<feature type="domain" description="WH2" evidence="3">
    <location>
        <begin position="497"/>
        <end position="514"/>
    </location>
</feature>
<feature type="region of interest" description="Disordered" evidence="4">
    <location>
        <begin position="169"/>
        <end position="202"/>
    </location>
</feature>
<feature type="region of interest" description="Disordered" evidence="4">
    <location>
        <begin position="307"/>
        <end position="400"/>
    </location>
</feature>
<feature type="region of interest" description="Disordered" evidence="4">
    <location>
        <begin position="412"/>
        <end position="492"/>
    </location>
</feature>
<feature type="compositionally biased region" description="Basic and acidic residues" evidence="4">
    <location>
        <begin position="182"/>
        <end position="202"/>
    </location>
</feature>
<feature type="compositionally biased region" description="Pro residues" evidence="4">
    <location>
        <begin position="322"/>
        <end position="332"/>
    </location>
</feature>
<feature type="compositionally biased region" description="Low complexity" evidence="4">
    <location>
        <begin position="333"/>
        <end position="346"/>
    </location>
</feature>
<feature type="compositionally biased region" description="Pro residues" evidence="4">
    <location>
        <begin position="347"/>
        <end position="374"/>
    </location>
</feature>
<feature type="compositionally biased region" description="Pro residues" evidence="4">
    <location>
        <begin position="384"/>
        <end position="399"/>
    </location>
</feature>
<feature type="compositionally biased region" description="Pro residues" evidence="4">
    <location>
        <begin position="423"/>
        <end position="437"/>
    </location>
</feature>
<feature type="compositionally biased region" description="Pro residues" evidence="4">
    <location>
        <begin position="458"/>
        <end position="477"/>
    </location>
</feature>
<feature type="modified residue" description="Asymmetric dimethylarginine; alternate" evidence="1">
    <location>
        <position position="341"/>
    </location>
</feature>
<feature type="modified residue" description="Omega-N-methylarginine; alternate" evidence="1">
    <location>
        <position position="341"/>
    </location>
</feature>
<feature type="modified residue" description="Phosphoserine" evidence="2">
    <location>
        <position position="489"/>
    </location>
</feature>
<organism>
    <name type="scientific">Rattus norvegicus</name>
    <name type="common">Rat</name>
    <dbReference type="NCBI Taxonomy" id="10116"/>
    <lineage>
        <taxon>Eukaryota</taxon>
        <taxon>Metazoa</taxon>
        <taxon>Chordata</taxon>
        <taxon>Craniata</taxon>
        <taxon>Vertebrata</taxon>
        <taxon>Euteleostomi</taxon>
        <taxon>Mammalia</taxon>
        <taxon>Eutheria</taxon>
        <taxon>Euarchontoglires</taxon>
        <taxon>Glires</taxon>
        <taxon>Rodentia</taxon>
        <taxon>Myomorpha</taxon>
        <taxon>Muroidea</taxon>
        <taxon>Muridae</taxon>
        <taxon>Murinae</taxon>
        <taxon>Rattus</taxon>
    </lineage>
</organism>
<accession>Q5BJU7</accession>
<evidence type="ECO:0000250" key="1">
    <source>
        <dbReference type="UniProtKB" id="Q8R5H6"/>
    </source>
</evidence>
<evidence type="ECO:0000250" key="2">
    <source>
        <dbReference type="UniProtKB" id="Q92558"/>
    </source>
</evidence>
<evidence type="ECO:0000255" key="3">
    <source>
        <dbReference type="PROSITE-ProRule" id="PRU00406"/>
    </source>
</evidence>
<evidence type="ECO:0000256" key="4">
    <source>
        <dbReference type="SAM" id="MobiDB-lite"/>
    </source>
</evidence>
<evidence type="ECO:0000269" key="5">
    <source>
    </source>
</evidence>
<evidence type="ECO:0000305" key="6"/>
<name>WASF1_RAT</name>
<proteinExistence type="evidence at protein level"/>
<reference key="1">
    <citation type="journal article" date="2004" name="Genome Res.">
        <title>The status, quality, and expansion of the NIH full-length cDNA project: the Mammalian Gene Collection (MGC).</title>
        <authorList>
            <consortium name="The MGC Project Team"/>
        </authorList>
    </citation>
    <scope>NUCLEOTIDE SEQUENCE [LARGE SCALE MRNA]</scope>
    <source>
        <tissue>Brain</tissue>
    </source>
</reference>
<reference key="2">
    <citation type="journal article" date="2007" name="EMBO J.">
        <title>Abelson interacting protein 1 (Abi-1) is essential for dendrite morphogenesis and synapse formation.</title>
        <authorList>
            <person name="Proepper C."/>
            <person name="Johannsen S."/>
            <person name="Liebau S."/>
            <person name="Dahl J."/>
            <person name="Vaida B."/>
            <person name="Bockmann J."/>
            <person name="Kreutz M.R."/>
            <person name="Gundelfinger E.D."/>
            <person name="Boeckers T.M."/>
        </authorList>
    </citation>
    <scope>INTERACTION WITH ABI1</scope>
    <scope>TISSUE SPECIFICITY</scope>
    <scope>SUBCELLULAR LOCATION</scope>
</reference>